<accession>P32751</accession>
<sequence>NIDQSFPGFHGSEMWNPNTDLSEDCLYLNVWIPAPKPKNATVLIWIYGGGFQTGTSSLHVYDGKFLARVERVIVVSMNYRVGALGFLALPGNPEAPGNMGLFDQQLALQWVQKNIAAFGGNPKSVTLFGESAGAASVSLHL</sequence>
<dbReference type="EC" id="3.1.1.8"/>
<dbReference type="EMBL" id="M62777">
    <property type="protein sequence ID" value="AAA36836.1"/>
    <property type="molecule type" value="Genomic_DNA"/>
</dbReference>
<dbReference type="PIR" id="G39768">
    <property type="entry name" value="G39768"/>
</dbReference>
<dbReference type="SMR" id="P32751"/>
<dbReference type="STRING" id="9544.ENSMMUP00000038672"/>
<dbReference type="ESTHER" id="macmu-BCHE">
    <property type="family name" value="BCHE"/>
</dbReference>
<dbReference type="MEROPS" id="S09.980"/>
<dbReference type="GlyCosmos" id="P32751">
    <property type="glycosylation" value="1 site, No reported glycans"/>
</dbReference>
<dbReference type="PaxDb" id="9544-ENSMMUP00000004989"/>
<dbReference type="eggNOG" id="KOG4389">
    <property type="taxonomic scope" value="Eukaryota"/>
</dbReference>
<dbReference type="InParanoid" id="P32751"/>
<dbReference type="Proteomes" id="UP000006718">
    <property type="component" value="Unassembled WGS sequence"/>
</dbReference>
<dbReference type="GO" id="GO:0005576">
    <property type="term" value="C:extracellular region"/>
    <property type="evidence" value="ECO:0007669"/>
    <property type="project" value="UniProtKB-SubCell"/>
</dbReference>
<dbReference type="GO" id="GO:0003990">
    <property type="term" value="F:acetylcholinesterase activity"/>
    <property type="evidence" value="ECO:0000250"/>
    <property type="project" value="UniProtKB"/>
</dbReference>
<dbReference type="GO" id="GO:0004104">
    <property type="term" value="F:cholinesterase activity"/>
    <property type="evidence" value="ECO:0000250"/>
    <property type="project" value="UniProtKB"/>
</dbReference>
<dbReference type="FunFam" id="3.40.50.1820:FF:000598">
    <property type="entry name" value="Cholinesterase"/>
    <property type="match status" value="1"/>
</dbReference>
<dbReference type="Gene3D" id="3.40.50.1820">
    <property type="entry name" value="alpha/beta hydrolase"/>
    <property type="match status" value="1"/>
</dbReference>
<dbReference type="InterPro" id="IPR029058">
    <property type="entry name" value="AB_hydrolase_fold"/>
</dbReference>
<dbReference type="InterPro" id="IPR050654">
    <property type="entry name" value="AChE-related_enzymes"/>
</dbReference>
<dbReference type="InterPro" id="IPR002018">
    <property type="entry name" value="CarbesteraseB"/>
</dbReference>
<dbReference type="InterPro" id="IPR019826">
    <property type="entry name" value="Carboxylesterase_B_AS"/>
</dbReference>
<dbReference type="InterPro" id="IPR019819">
    <property type="entry name" value="Carboxylesterase_B_CS"/>
</dbReference>
<dbReference type="InterPro" id="IPR000997">
    <property type="entry name" value="Cholinesterase"/>
</dbReference>
<dbReference type="PANTHER" id="PTHR43918">
    <property type="entry name" value="ACETYLCHOLINESTERASE"/>
    <property type="match status" value="1"/>
</dbReference>
<dbReference type="PANTHER" id="PTHR43918:SF5">
    <property type="entry name" value="CHOLINESTERASE"/>
    <property type="match status" value="1"/>
</dbReference>
<dbReference type="Pfam" id="PF00135">
    <property type="entry name" value="COesterase"/>
    <property type="match status" value="1"/>
</dbReference>
<dbReference type="PRINTS" id="PR00878">
    <property type="entry name" value="CHOLNESTRASE"/>
</dbReference>
<dbReference type="SUPFAM" id="SSF53474">
    <property type="entry name" value="alpha/beta-Hydrolases"/>
    <property type="match status" value="1"/>
</dbReference>
<dbReference type="PROSITE" id="PS00122">
    <property type="entry name" value="CARBOXYLESTERASE_B_1"/>
    <property type="match status" value="1"/>
</dbReference>
<dbReference type="PROSITE" id="PS00941">
    <property type="entry name" value="CARBOXYLESTERASE_B_2"/>
    <property type="match status" value="1"/>
</dbReference>
<organism>
    <name type="scientific">Macaca mulatta</name>
    <name type="common">Rhesus macaque</name>
    <dbReference type="NCBI Taxonomy" id="9544"/>
    <lineage>
        <taxon>Eukaryota</taxon>
        <taxon>Metazoa</taxon>
        <taxon>Chordata</taxon>
        <taxon>Craniata</taxon>
        <taxon>Vertebrata</taxon>
        <taxon>Euteleostomi</taxon>
        <taxon>Mammalia</taxon>
        <taxon>Eutheria</taxon>
        <taxon>Euarchontoglires</taxon>
        <taxon>Primates</taxon>
        <taxon>Haplorrhini</taxon>
        <taxon>Catarrhini</taxon>
        <taxon>Cercopithecidae</taxon>
        <taxon>Cercopithecinae</taxon>
        <taxon>Macaca</taxon>
    </lineage>
</organism>
<keyword id="KW-1015">Disulfide bond</keyword>
<keyword id="KW-0325">Glycoprotein</keyword>
<keyword id="KW-0378">Hydrolase</keyword>
<keyword id="KW-0597">Phosphoprotein</keyword>
<keyword id="KW-1185">Reference proteome</keyword>
<keyword id="KW-0964">Secreted</keyword>
<keyword id="KW-0719">Serine esterase</keyword>
<name>CHLE_MACMU</name>
<gene>
    <name type="primary">BCHE</name>
</gene>
<feature type="chain" id="PRO_0000070286" description="Cholinesterase">
    <location>
        <begin position="1" status="less than"/>
        <end position="141" status="greater than"/>
    </location>
</feature>
<feature type="active site" description="Acyl-ester intermediate" evidence="4">
    <location>
        <position position="131"/>
    </location>
</feature>
<feature type="binding site" evidence="1">
    <location>
        <begin position="49"/>
        <end position="50"/>
    </location>
    <ligand>
        <name>substrate</name>
    </ligand>
</feature>
<feature type="modified residue" description="Phosphoserine" evidence="2">
    <location>
        <position position="131"/>
    </location>
</feature>
<feature type="glycosylation site" description="N-linked (GlcNAc...) asparagine" evidence="3">
    <location>
        <position position="39"/>
    </location>
</feature>
<feature type="non-terminal residue">
    <location>
        <position position="1"/>
    </location>
</feature>
<feature type="non-terminal residue">
    <location>
        <position position="141"/>
    </location>
</feature>
<comment type="function">
    <text evidence="1">Esterase with broad substrate specificity. Contributes to the inactivation of the neurotransmitter acetylcholine. Can degrade neurotoxic organophosphate esters (By similarity).</text>
</comment>
<comment type="catalytic activity">
    <reaction>
        <text>an acylcholine + H2O = a carboxylate + choline + H(+)</text>
        <dbReference type="Rhea" id="RHEA:21964"/>
        <dbReference type="ChEBI" id="CHEBI:15354"/>
        <dbReference type="ChEBI" id="CHEBI:15377"/>
        <dbReference type="ChEBI" id="CHEBI:15378"/>
        <dbReference type="ChEBI" id="CHEBI:29067"/>
        <dbReference type="ChEBI" id="CHEBI:35287"/>
        <dbReference type="EC" id="3.1.1.8"/>
    </reaction>
</comment>
<comment type="subunit">
    <text evidence="1">Homotetramer; disulfide-linked. Dimer of dimers (By similarity).</text>
</comment>
<comment type="subcellular location">
    <subcellularLocation>
        <location evidence="1">Secreted</location>
    </subcellularLocation>
</comment>
<comment type="tissue specificity">
    <text>Present in most cells except erythrocytes.</text>
</comment>
<comment type="similarity">
    <text evidence="5">Belongs to the type-B carboxylesterase/lipase family.</text>
</comment>
<evidence type="ECO:0000250" key="1"/>
<evidence type="ECO:0000250" key="2">
    <source>
        <dbReference type="UniProtKB" id="P06276"/>
    </source>
</evidence>
<evidence type="ECO:0000255" key="3"/>
<evidence type="ECO:0000255" key="4">
    <source>
        <dbReference type="PROSITE-ProRule" id="PRU10039"/>
    </source>
</evidence>
<evidence type="ECO:0000305" key="5"/>
<proteinExistence type="evidence at transcript level"/>
<reference key="1">
    <citation type="journal article" date="1991" name="J. Biol. Chem.">
        <title>Use of the polymerase chain reaction for homology probing of butyrylcholinesterase from several vertebrates.</title>
        <authorList>
            <person name="Arpagaus M."/>
            <person name="Chatonnet A."/>
            <person name="Masson P."/>
            <person name="Newton M."/>
            <person name="Vaughan T.A."/>
            <person name="Bartels C.F."/>
            <person name="Nogueira C.P."/>
            <person name="la Du B.N."/>
            <person name="Lockridge O."/>
        </authorList>
    </citation>
    <scope>NUCLEOTIDE SEQUENCE [GENOMIC DNA]</scope>
    <source>
        <tissue>Liver</tissue>
    </source>
</reference>
<protein>
    <recommendedName>
        <fullName>Cholinesterase</fullName>
        <ecNumber>3.1.1.8</ecNumber>
    </recommendedName>
    <alternativeName>
        <fullName>Acylcholine acylhydrolase</fullName>
    </alternativeName>
    <alternativeName>
        <fullName>Butyrylcholine esterase</fullName>
    </alternativeName>
    <alternativeName>
        <fullName>Choline esterase II</fullName>
    </alternativeName>
    <alternativeName>
        <fullName>Pseudocholinesterase</fullName>
    </alternativeName>
</protein>